<evidence type="ECO:0000255" key="1">
    <source>
        <dbReference type="HAMAP-Rule" id="MF_02108"/>
    </source>
</evidence>
<feature type="chain" id="PRO_0000387770" description="HTH-type transcriptional regulator MurR">
    <location>
        <begin position="1"/>
        <end position="287"/>
    </location>
</feature>
<feature type="domain" description="HTH rpiR-type" evidence="1">
    <location>
        <begin position="1"/>
        <end position="77"/>
    </location>
</feature>
<feature type="domain" description="SIS" evidence="1">
    <location>
        <begin position="128"/>
        <end position="268"/>
    </location>
</feature>
<feature type="DNA-binding region" description="H-T-H motif" evidence="1">
    <location>
        <begin position="37"/>
        <end position="56"/>
    </location>
</feature>
<keyword id="KW-0119">Carbohydrate metabolism</keyword>
<keyword id="KW-0238">DNA-binding</keyword>
<keyword id="KW-1185">Reference proteome</keyword>
<keyword id="KW-0678">Repressor</keyword>
<keyword id="KW-0804">Transcription</keyword>
<keyword id="KW-0805">Transcription regulation</keyword>
<proteinExistence type="inferred from homology"/>
<comment type="function">
    <text evidence="1">Represses the expression of the murPQ operon involved in the uptake and degradation of N-acetylmuramic acid (MurNAc). Binds to two adjacent inverted repeats within the operator region. MurNAc 6-phosphate, the substrate of MurQ, is the specific inducer that weakens binding of MurR to the operator.</text>
</comment>
<comment type="pathway">
    <text>Amino-sugar metabolism; N-acetylmuramate degradation [regulation].</text>
</comment>
<comment type="subunit">
    <text evidence="1">Homotetramer.</text>
</comment>
<accession>A9MIE1</accession>
<organism>
    <name type="scientific">Salmonella arizonae (strain ATCC BAA-731 / CDC346-86 / RSK2980)</name>
    <dbReference type="NCBI Taxonomy" id="41514"/>
    <lineage>
        <taxon>Bacteria</taxon>
        <taxon>Pseudomonadati</taxon>
        <taxon>Pseudomonadota</taxon>
        <taxon>Gammaproteobacteria</taxon>
        <taxon>Enterobacterales</taxon>
        <taxon>Enterobacteriaceae</taxon>
        <taxon>Salmonella</taxon>
    </lineage>
</organism>
<protein>
    <recommendedName>
        <fullName evidence="1">HTH-type transcriptional regulator MurR</fullName>
    </recommendedName>
    <alternativeName>
        <fullName evidence="1">MurPQ operon repressor</fullName>
    </alternativeName>
</protein>
<gene>
    <name evidence="1" type="primary">murR</name>
    <name type="ordered locus">SARI_00442</name>
</gene>
<reference key="1">
    <citation type="submission" date="2007-11" db="EMBL/GenBank/DDBJ databases">
        <authorList>
            <consortium name="The Salmonella enterica serovar Arizonae Genome Sequencing Project"/>
            <person name="McClelland M."/>
            <person name="Sanderson E.K."/>
            <person name="Porwollik S."/>
            <person name="Spieth J."/>
            <person name="Clifton W.S."/>
            <person name="Fulton R."/>
            <person name="Chunyan W."/>
            <person name="Wollam A."/>
            <person name="Shah N."/>
            <person name="Pepin K."/>
            <person name="Bhonagiri V."/>
            <person name="Nash W."/>
            <person name="Johnson M."/>
            <person name="Thiruvilangam P."/>
            <person name="Wilson R."/>
        </authorList>
    </citation>
    <scope>NUCLEOTIDE SEQUENCE [LARGE SCALE GENOMIC DNA]</scope>
    <source>
        <strain>ATCC BAA-731 / CDC346-86 / RSK2980</strain>
    </source>
</reference>
<name>MURR_SALAR</name>
<sequence>MLYLAKMRNAEGEFTENEQKIATFLLAHVGELKTVSSRNMAKQLEISQSSIVKFAQKLGANGFTELRMALIEEHSVSREKKRDKAVHLHSSITSEDSLEMMARKLNREKIVALEETYNLMDYERLEQVINLISKAPLIQITGVGGSALVGRDLSFKLMKIGFRVACEVDTHVQATIAQALRQGDVQIAISYSGSKKEIVLCAEAARKQGATVIAITSLADSPLRRLADYTLDTVSGETEWRSSSMSTRTAQNSVTDLLFVGMVQLNDVESLRMIERSSELITLLDRS</sequence>
<dbReference type="EMBL" id="CP000880">
    <property type="protein sequence ID" value="ABX20378.1"/>
    <property type="molecule type" value="Genomic_DNA"/>
</dbReference>
<dbReference type="SMR" id="A9MIE1"/>
<dbReference type="STRING" id="41514.SARI_00442"/>
<dbReference type="KEGG" id="ses:SARI_00442"/>
<dbReference type="HOGENOM" id="CLU_055769_0_2_6"/>
<dbReference type="UniPathway" id="UPA00342"/>
<dbReference type="Proteomes" id="UP000002084">
    <property type="component" value="Chromosome"/>
</dbReference>
<dbReference type="GO" id="GO:0097367">
    <property type="term" value="F:carbohydrate derivative binding"/>
    <property type="evidence" value="ECO:0007669"/>
    <property type="project" value="InterPro"/>
</dbReference>
<dbReference type="GO" id="GO:0003677">
    <property type="term" value="F:DNA binding"/>
    <property type="evidence" value="ECO:0007669"/>
    <property type="project" value="UniProtKB-KW"/>
</dbReference>
<dbReference type="GO" id="GO:0003700">
    <property type="term" value="F:DNA-binding transcription factor activity"/>
    <property type="evidence" value="ECO:0007669"/>
    <property type="project" value="UniProtKB-UniRule"/>
</dbReference>
<dbReference type="GO" id="GO:1901135">
    <property type="term" value="P:carbohydrate derivative metabolic process"/>
    <property type="evidence" value="ECO:0007669"/>
    <property type="project" value="InterPro"/>
</dbReference>
<dbReference type="GO" id="GO:0097173">
    <property type="term" value="P:N-acetylmuramic acid catabolic process"/>
    <property type="evidence" value="ECO:0007669"/>
    <property type="project" value="UniProtKB-UniPathway"/>
</dbReference>
<dbReference type="GO" id="GO:0045892">
    <property type="term" value="P:negative regulation of DNA-templated transcription"/>
    <property type="evidence" value="ECO:0007669"/>
    <property type="project" value="UniProtKB-UniRule"/>
</dbReference>
<dbReference type="GO" id="GO:0043470">
    <property type="term" value="P:regulation of carbohydrate catabolic process"/>
    <property type="evidence" value="ECO:0007669"/>
    <property type="project" value="UniProtKB-UniRule"/>
</dbReference>
<dbReference type="CDD" id="cd05013">
    <property type="entry name" value="SIS_RpiR"/>
    <property type="match status" value="1"/>
</dbReference>
<dbReference type="Gene3D" id="3.40.50.10490">
    <property type="entry name" value="Glucose-6-phosphate isomerase like protein, domain 1"/>
    <property type="match status" value="1"/>
</dbReference>
<dbReference type="Gene3D" id="1.10.10.10">
    <property type="entry name" value="Winged helix-like DNA-binding domain superfamily/Winged helix DNA-binding domain"/>
    <property type="match status" value="1"/>
</dbReference>
<dbReference type="HAMAP" id="MF_02108">
    <property type="entry name" value="HTH_type_MurR"/>
    <property type="match status" value="1"/>
</dbReference>
<dbReference type="InterPro" id="IPR009057">
    <property type="entry name" value="Homeodomain-like_sf"/>
</dbReference>
<dbReference type="InterPro" id="IPR000281">
    <property type="entry name" value="HTH_RpiR"/>
</dbReference>
<dbReference type="InterPro" id="IPR047640">
    <property type="entry name" value="RpiR-like"/>
</dbReference>
<dbReference type="InterPro" id="IPR035472">
    <property type="entry name" value="RpiR-like_SIS"/>
</dbReference>
<dbReference type="InterPro" id="IPR001347">
    <property type="entry name" value="SIS_dom"/>
</dbReference>
<dbReference type="InterPro" id="IPR046348">
    <property type="entry name" value="SIS_dom_sf"/>
</dbReference>
<dbReference type="InterPro" id="IPR022821">
    <property type="entry name" value="Tscrpt_reg_HTH_MurR"/>
</dbReference>
<dbReference type="InterPro" id="IPR036388">
    <property type="entry name" value="WH-like_DNA-bd_sf"/>
</dbReference>
<dbReference type="NCBIfam" id="NF012026">
    <property type="entry name" value="PRK15482.1"/>
    <property type="match status" value="1"/>
</dbReference>
<dbReference type="PANTHER" id="PTHR30514">
    <property type="entry name" value="GLUCOKINASE"/>
    <property type="match status" value="1"/>
</dbReference>
<dbReference type="PANTHER" id="PTHR30514:SF17">
    <property type="entry name" value="HTH-TYPE TRANSCRIPTIONAL REGULATOR MURR"/>
    <property type="match status" value="1"/>
</dbReference>
<dbReference type="Pfam" id="PF01418">
    <property type="entry name" value="HTH_6"/>
    <property type="match status" value="1"/>
</dbReference>
<dbReference type="Pfam" id="PF01380">
    <property type="entry name" value="SIS"/>
    <property type="match status" value="1"/>
</dbReference>
<dbReference type="SUPFAM" id="SSF46689">
    <property type="entry name" value="Homeodomain-like"/>
    <property type="match status" value="1"/>
</dbReference>
<dbReference type="SUPFAM" id="SSF53697">
    <property type="entry name" value="SIS domain"/>
    <property type="match status" value="1"/>
</dbReference>
<dbReference type="PROSITE" id="PS51071">
    <property type="entry name" value="HTH_RPIR"/>
    <property type="match status" value="1"/>
</dbReference>
<dbReference type="PROSITE" id="PS51464">
    <property type="entry name" value="SIS"/>
    <property type="match status" value="1"/>
</dbReference>